<feature type="chain" id="PRO_1000123355" description="Large ribosomal subunit protein bL19">
    <location>
        <begin position="1"/>
        <end position="122"/>
    </location>
</feature>
<sequence>MDQLIQVVEAAQERQDLPEIRPGDTIKMQLRVIEGEKERLQAYEGVIISDSGAGTNRTITVRKISNGVGVERIIPLNSPNIESIEVRKYGKTRRAKLSYLRKRTGKAALRVKERKVSAPAGK</sequence>
<comment type="function">
    <text evidence="1">This protein is located at the 30S-50S ribosomal subunit interface and may play a role in the structure and function of the aminoacyl-tRNA binding site.</text>
</comment>
<comment type="similarity">
    <text evidence="1">Belongs to the bacterial ribosomal protein bL19 family.</text>
</comment>
<organism>
    <name type="scientific">Prosthecochloris aestuarii (strain DSM 271 / SK 413)</name>
    <dbReference type="NCBI Taxonomy" id="290512"/>
    <lineage>
        <taxon>Bacteria</taxon>
        <taxon>Pseudomonadati</taxon>
        <taxon>Chlorobiota</taxon>
        <taxon>Chlorobiia</taxon>
        <taxon>Chlorobiales</taxon>
        <taxon>Chlorobiaceae</taxon>
        <taxon>Prosthecochloris</taxon>
    </lineage>
</organism>
<gene>
    <name evidence="1" type="primary">rplS</name>
    <name type="ordered locus">Paes_1018</name>
</gene>
<proteinExistence type="inferred from homology"/>
<name>RL19_PROA2</name>
<reference key="1">
    <citation type="submission" date="2008-06" db="EMBL/GenBank/DDBJ databases">
        <title>Complete sequence of chromosome of Prosthecochloris aestuarii DSM 271.</title>
        <authorList>
            <consortium name="US DOE Joint Genome Institute"/>
            <person name="Lucas S."/>
            <person name="Copeland A."/>
            <person name="Lapidus A."/>
            <person name="Glavina del Rio T."/>
            <person name="Dalin E."/>
            <person name="Tice H."/>
            <person name="Bruce D."/>
            <person name="Goodwin L."/>
            <person name="Pitluck S."/>
            <person name="Schmutz J."/>
            <person name="Larimer F."/>
            <person name="Land M."/>
            <person name="Hauser L."/>
            <person name="Kyrpides N."/>
            <person name="Anderson I."/>
            <person name="Liu Z."/>
            <person name="Li T."/>
            <person name="Zhao F."/>
            <person name="Overmann J."/>
            <person name="Bryant D.A."/>
            <person name="Richardson P."/>
        </authorList>
    </citation>
    <scope>NUCLEOTIDE SEQUENCE [LARGE SCALE GENOMIC DNA]</scope>
    <source>
        <strain>DSM 271 / SK 413</strain>
    </source>
</reference>
<protein>
    <recommendedName>
        <fullName evidence="1">Large ribosomal subunit protein bL19</fullName>
    </recommendedName>
    <alternativeName>
        <fullName evidence="2">50S ribosomal protein L19</fullName>
    </alternativeName>
</protein>
<accession>B4S7M0</accession>
<dbReference type="EMBL" id="CP001108">
    <property type="protein sequence ID" value="ACF46057.1"/>
    <property type="molecule type" value="Genomic_DNA"/>
</dbReference>
<dbReference type="RefSeq" id="WP_012505594.1">
    <property type="nucleotide sequence ID" value="NC_011059.1"/>
</dbReference>
<dbReference type="SMR" id="B4S7M0"/>
<dbReference type="STRING" id="290512.Paes_1018"/>
<dbReference type="KEGG" id="paa:Paes_1018"/>
<dbReference type="eggNOG" id="COG0335">
    <property type="taxonomic scope" value="Bacteria"/>
</dbReference>
<dbReference type="HOGENOM" id="CLU_103507_2_1_10"/>
<dbReference type="Proteomes" id="UP000002725">
    <property type="component" value="Chromosome"/>
</dbReference>
<dbReference type="GO" id="GO:0022625">
    <property type="term" value="C:cytosolic large ribosomal subunit"/>
    <property type="evidence" value="ECO:0007669"/>
    <property type="project" value="TreeGrafter"/>
</dbReference>
<dbReference type="GO" id="GO:0003735">
    <property type="term" value="F:structural constituent of ribosome"/>
    <property type="evidence" value="ECO:0007669"/>
    <property type="project" value="InterPro"/>
</dbReference>
<dbReference type="GO" id="GO:0006412">
    <property type="term" value="P:translation"/>
    <property type="evidence" value="ECO:0007669"/>
    <property type="project" value="UniProtKB-UniRule"/>
</dbReference>
<dbReference type="Gene3D" id="2.30.30.790">
    <property type="match status" value="1"/>
</dbReference>
<dbReference type="HAMAP" id="MF_00402">
    <property type="entry name" value="Ribosomal_bL19"/>
    <property type="match status" value="1"/>
</dbReference>
<dbReference type="InterPro" id="IPR001857">
    <property type="entry name" value="Ribosomal_bL19"/>
</dbReference>
<dbReference type="InterPro" id="IPR018257">
    <property type="entry name" value="Ribosomal_bL19_CS"/>
</dbReference>
<dbReference type="InterPro" id="IPR038657">
    <property type="entry name" value="Ribosomal_bL19_sf"/>
</dbReference>
<dbReference type="InterPro" id="IPR008991">
    <property type="entry name" value="Translation_prot_SH3-like_sf"/>
</dbReference>
<dbReference type="NCBIfam" id="TIGR01024">
    <property type="entry name" value="rplS_bact"/>
    <property type="match status" value="1"/>
</dbReference>
<dbReference type="PANTHER" id="PTHR15680:SF9">
    <property type="entry name" value="LARGE RIBOSOMAL SUBUNIT PROTEIN BL19M"/>
    <property type="match status" value="1"/>
</dbReference>
<dbReference type="PANTHER" id="PTHR15680">
    <property type="entry name" value="RIBOSOMAL PROTEIN L19"/>
    <property type="match status" value="1"/>
</dbReference>
<dbReference type="Pfam" id="PF01245">
    <property type="entry name" value="Ribosomal_L19"/>
    <property type="match status" value="1"/>
</dbReference>
<dbReference type="PIRSF" id="PIRSF002191">
    <property type="entry name" value="Ribosomal_L19"/>
    <property type="match status" value="1"/>
</dbReference>
<dbReference type="PRINTS" id="PR00061">
    <property type="entry name" value="RIBOSOMALL19"/>
</dbReference>
<dbReference type="SUPFAM" id="SSF50104">
    <property type="entry name" value="Translation proteins SH3-like domain"/>
    <property type="match status" value="1"/>
</dbReference>
<dbReference type="PROSITE" id="PS01015">
    <property type="entry name" value="RIBOSOMAL_L19"/>
    <property type="match status" value="1"/>
</dbReference>
<evidence type="ECO:0000255" key="1">
    <source>
        <dbReference type="HAMAP-Rule" id="MF_00402"/>
    </source>
</evidence>
<evidence type="ECO:0000305" key="2"/>
<keyword id="KW-0687">Ribonucleoprotein</keyword>
<keyword id="KW-0689">Ribosomal protein</keyword>